<gene>
    <name evidence="1" type="primary">ispG</name>
    <name type="ordered locus">XC_2455</name>
</gene>
<keyword id="KW-0004">4Fe-4S</keyword>
<keyword id="KW-0408">Iron</keyword>
<keyword id="KW-0411">Iron-sulfur</keyword>
<keyword id="KW-0414">Isoprene biosynthesis</keyword>
<keyword id="KW-0479">Metal-binding</keyword>
<keyword id="KW-0560">Oxidoreductase</keyword>
<dbReference type="EC" id="1.17.7.3" evidence="1"/>
<dbReference type="EMBL" id="CP000050">
    <property type="protein sequence ID" value="AAY49505.1"/>
    <property type="molecule type" value="Genomic_DNA"/>
</dbReference>
<dbReference type="RefSeq" id="WP_011036954.1">
    <property type="nucleotide sequence ID" value="NZ_CP155948.1"/>
</dbReference>
<dbReference type="SMR" id="Q4UTW8"/>
<dbReference type="GeneID" id="58013667"/>
<dbReference type="KEGG" id="xcb:XC_2455"/>
<dbReference type="HOGENOM" id="CLU_042258_1_0_6"/>
<dbReference type="UniPathway" id="UPA00056">
    <property type="reaction ID" value="UER00096"/>
</dbReference>
<dbReference type="Proteomes" id="UP000000420">
    <property type="component" value="Chromosome"/>
</dbReference>
<dbReference type="GO" id="GO:0051539">
    <property type="term" value="F:4 iron, 4 sulfur cluster binding"/>
    <property type="evidence" value="ECO:0007669"/>
    <property type="project" value="UniProtKB-UniRule"/>
</dbReference>
<dbReference type="GO" id="GO:0046429">
    <property type="term" value="F:4-hydroxy-3-methylbut-2-en-1-yl diphosphate synthase activity (ferredoxin)"/>
    <property type="evidence" value="ECO:0007669"/>
    <property type="project" value="UniProtKB-UniRule"/>
</dbReference>
<dbReference type="GO" id="GO:0141197">
    <property type="term" value="F:4-hydroxy-3-methylbut-2-enyl-diphosphate synthase activity (flavodoxin)"/>
    <property type="evidence" value="ECO:0007669"/>
    <property type="project" value="UniProtKB-EC"/>
</dbReference>
<dbReference type="GO" id="GO:0005506">
    <property type="term" value="F:iron ion binding"/>
    <property type="evidence" value="ECO:0007669"/>
    <property type="project" value="InterPro"/>
</dbReference>
<dbReference type="GO" id="GO:0019288">
    <property type="term" value="P:isopentenyl diphosphate biosynthetic process, methylerythritol 4-phosphate pathway"/>
    <property type="evidence" value="ECO:0007669"/>
    <property type="project" value="UniProtKB-UniRule"/>
</dbReference>
<dbReference type="GO" id="GO:0016114">
    <property type="term" value="P:terpenoid biosynthetic process"/>
    <property type="evidence" value="ECO:0007669"/>
    <property type="project" value="InterPro"/>
</dbReference>
<dbReference type="FunFam" id="3.20.20.20:FF:000001">
    <property type="entry name" value="4-hydroxy-3-methylbut-2-en-1-yl diphosphate synthase (flavodoxin)"/>
    <property type="match status" value="1"/>
</dbReference>
<dbReference type="FunFam" id="3.30.413.10:FF:000012">
    <property type="entry name" value="4-hydroxy-3-methylbut-2-en-1-yl diphosphate synthase (flavodoxin)"/>
    <property type="match status" value="1"/>
</dbReference>
<dbReference type="Gene3D" id="3.20.20.20">
    <property type="entry name" value="Dihydropteroate synthase-like"/>
    <property type="match status" value="1"/>
</dbReference>
<dbReference type="Gene3D" id="3.30.413.10">
    <property type="entry name" value="Sulfite Reductase Hemoprotein, domain 1"/>
    <property type="match status" value="1"/>
</dbReference>
<dbReference type="HAMAP" id="MF_00159">
    <property type="entry name" value="IspG"/>
    <property type="match status" value="1"/>
</dbReference>
<dbReference type="InterPro" id="IPR011005">
    <property type="entry name" value="Dihydropteroate_synth-like_sf"/>
</dbReference>
<dbReference type="InterPro" id="IPR016425">
    <property type="entry name" value="IspG_bac"/>
</dbReference>
<dbReference type="InterPro" id="IPR004588">
    <property type="entry name" value="IspG_bac-typ"/>
</dbReference>
<dbReference type="InterPro" id="IPR045854">
    <property type="entry name" value="NO2/SO3_Rdtase_4Fe4S_sf"/>
</dbReference>
<dbReference type="NCBIfam" id="TIGR00612">
    <property type="entry name" value="ispG_gcpE"/>
    <property type="match status" value="1"/>
</dbReference>
<dbReference type="NCBIfam" id="NF001540">
    <property type="entry name" value="PRK00366.1"/>
    <property type="match status" value="1"/>
</dbReference>
<dbReference type="PANTHER" id="PTHR30454">
    <property type="entry name" value="4-HYDROXY-3-METHYLBUT-2-EN-1-YL DIPHOSPHATE SYNTHASE"/>
    <property type="match status" value="1"/>
</dbReference>
<dbReference type="PANTHER" id="PTHR30454:SF0">
    <property type="entry name" value="4-HYDROXY-3-METHYLBUT-2-EN-1-YL DIPHOSPHATE SYNTHASE (FERREDOXIN), CHLOROPLASTIC"/>
    <property type="match status" value="1"/>
</dbReference>
<dbReference type="Pfam" id="PF04551">
    <property type="entry name" value="GcpE"/>
    <property type="match status" value="1"/>
</dbReference>
<dbReference type="PIRSF" id="PIRSF004640">
    <property type="entry name" value="IspG"/>
    <property type="match status" value="1"/>
</dbReference>
<protein>
    <recommendedName>
        <fullName evidence="1">4-hydroxy-3-methylbut-2-en-1-yl diphosphate synthase (flavodoxin)</fullName>
        <ecNumber evidence="1">1.17.7.3</ecNumber>
    </recommendedName>
    <alternativeName>
        <fullName evidence="1">1-hydroxy-2-methyl-2-(E)-butenyl 4-diphosphate synthase</fullName>
    </alternativeName>
</protein>
<reference key="1">
    <citation type="journal article" date="2005" name="Genome Res.">
        <title>Comparative and functional genomic analyses of the pathogenicity of phytopathogen Xanthomonas campestris pv. campestris.</title>
        <authorList>
            <person name="Qian W."/>
            <person name="Jia Y."/>
            <person name="Ren S.-X."/>
            <person name="He Y.-Q."/>
            <person name="Feng J.-X."/>
            <person name="Lu L.-F."/>
            <person name="Sun Q."/>
            <person name="Ying G."/>
            <person name="Tang D.-J."/>
            <person name="Tang H."/>
            <person name="Wu W."/>
            <person name="Hao P."/>
            <person name="Wang L."/>
            <person name="Jiang B.-L."/>
            <person name="Zeng S."/>
            <person name="Gu W.-Y."/>
            <person name="Lu G."/>
            <person name="Rong L."/>
            <person name="Tian Y."/>
            <person name="Yao Z."/>
            <person name="Fu G."/>
            <person name="Chen B."/>
            <person name="Fang R."/>
            <person name="Qiang B."/>
            <person name="Chen Z."/>
            <person name="Zhao G.-P."/>
            <person name="Tang J.-L."/>
            <person name="He C."/>
        </authorList>
    </citation>
    <scope>NUCLEOTIDE SEQUENCE [LARGE SCALE GENOMIC DNA]</scope>
    <source>
        <strain>8004</strain>
    </source>
</reference>
<accession>Q4UTW8</accession>
<organism>
    <name type="scientific">Xanthomonas campestris pv. campestris (strain 8004)</name>
    <dbReference type="NCBI Taxonomy" id="314565"/>
    <lineage>
        <taxon>Bacteria</taxon>
        <taxon>Pseudomonadati</taxon>
        <taxon>Pseudomonadota</taxon>
        <taxon>Gammaproteobacteria</taxon>
        <taxon>Lysobacterales</taxon>
        <taxon>Lysobacteraceae</taxon>
        <taxon>Xanthomonas</taxon>
    </lineage>
</organism>
<feature type="chain" id="PRO_1000011543" description="4-hydroxy-3-methylbut-2-en-1-yl diphosphate synthase (flavodoxin)">
    <location>
        <begin position="1"/>
        <end position="421"/>
    </location>
</feature>
<feature type="binding site" evidence="1">
    <location>
        <position position="311"/>
    </location>
    <ligand>
        <name>[4Fe-4S] cluster</name>
        <dbReference type="ChEBI" id="CHEBI:49883"/>
    </ligand>
</feature>
<feature type="binding site" evidence="1">
    <location>
        <position position="314"/>
    </location>
    <ligand>
        <name>[4Fe-4S] cluster</name>
        <dbReference type="ChEBI" id="CHEBI:49883"/>
    </ligand>
</feature>
<feature type="binding site" evidence="1">
    <location>
        <position position="357"/>
    </location>
    <ligand>
        <name>[4Fe-4S] cluster</name>
        <dbReference type="ChEBI" id="CHEBI:49883"/>
    </ligand>
</feature>
<feature type="binding site" evidence="1">
    <location>
        <position position="364"/>
    </location>
    <ligand>
        <name>[4Fe-4S] cluster</name>
        <dbReference type="ChEBI" id="CHEBI:49883"/>
    </ligand>
</feature>
<evidence type="ECO:0000255" key="1">
    <source>
        <dbReference type="HAMAP-Rule" id="MF_00159"/>
    </source>
</evidence>
<comment type="function">
    <text evidence="1">Converts 2C-methyl-D-erythritol 2,4-cyclodiphosphate (ME-2,4cPP) into 1-hydroxy-2-methyl-2-(E)-butenyl 4-diphosphate.</text>
</comment>
<comment type="catalytic activity">
    <reaction evidence="1">
        <text>(2E)-4-hydroxy-3-methylbut-2-enyl diphosphate + oxidized [flavodoxin] + H2O + 2 H(+) = 2-C-methyl-D-erythritol 2,4-cyclic diphosphate + reduced [flavodoxin]</text>
        <dbReference type="Rhea" id="RHEA:43604"/>
        <dbReference type="Rhea" id="RHEA-COMP:10622"/>
        <dbReference type="Rhea" id="RHEA-COMP:10623"/>
        <dbReference type="ChEBI" id="CHEBI:15377"/>
        <dbReference type="ChEBI" id="CHEBI:15378"/>
        <dbReference type="ChEBI" id="CHEBI:57618"/>
        <dbReference type="ChEBI" id="CHEBI:58210"/>
        <dbReference type="ChEBI" id="CHEBI:58483"/>
        <dbReference type="ChEBI" id="CHEBI:128753"/>
        <dbReference type="EC" id="1.17.7.3"/>
    </reaction>
</comment>
<comment type="cofactor">
    <cofactor evidence="1">
        <name>[4Fe-4S] cluster</name>
        <dbReference type="ChEBI" id="CHEBI:49883"/>
    </cofactor>
    <text evidence="1">Binds 1 [4Fe-4S] cluster.</text>
</comment>
<comment type="pathway">
    <text evidence="1">Isoprenoid biosynthesis; isopentenyl diphosphate biosynthesis via DXP pathway; isopentenyl diphosphate from 1-deoxy-D-xylulose 5-phosphate: step 5/6.</text>
</comment>
<comment type="similarity">
    <text evidence="1">Belongs to the IspG family.</text>
</comment>
<proteinExistence type="inferred from homology"/>
<name>ISPG_XANC8</name>
<sequence>MYDAVTRPSPPADASAWPRRITQAVKVGNVIVGGGHPVVVQSMTNTDTADIAGSVKQVAELWRAGSEMVRLTVNNAESAAAIPRIVEKLRMMGIEVPLIGDFHYNGHQLLTAEPACAEALAKYRINPGNVGFGKKKDLQFAQLIEFAIQYDKPVRIGANWGSLDQALAAQLMDENSKRETPWDAGRVLREALIRSAVDSAERAVELGLPRERIILSAKVSGVQELIAVYRDMAARCDFALHLGLTEAGIGSKGIVASAAALSVLLQEGIGDTIRISLTPEPGQSRTQEVIVAQELLQTTGQRAFTPLVTACPGCGRTTSEFFQELAGVVQNHVRAKMPEWKISNPGAENMTLAVMGCVVNGPGESRHANIGISLPGTGEAPSAPVFVDGEKTVTLRGENIAYEFIDLIDQYVERTYVRRAG</sequence>